<protein>
    <recommendedName>
        <fullName evidence="1">Small ribosomal subunit protein bS6</fullName>
    </recommendedName>
    <alternativeName>
        <fullName evidence="2">30S ribosomal protein S6</fullName>
    </alternativeName>
</protein>
<name>RS6_STRT2</name>
<evidence type="ECO:0000255" key="1">
    <source>
        <dbReference type="HAMAP-Rule" id="MF_00360"/>
    </source>
</evidence>
<evidence type="ECO:0000305" key="2"/>
<comment type="function">
    <text evidence="1">Binds together with bS18 to 16S ribosomal RNA.</text>
</comment>
<comment type="similarity">
    <text evidence="1">Belongs to the bacterial ribosomal protein bS6 family.</text>
</comment>
<comment type="sequence caution" evidence="2">
    <conflict type="erroneous initiation">
        <sequence resource="EMBL-CDS" id="AAV61353"/>
    </conflict>
</comment>
<keyword id="KW-1185">Reference proteome</keyword>
<keyword id="KW-0687">Ribonucleoprotein</keyword>
<keyword id="KW-0689">Ribosomal protein</keyword>
<keyword id="KW-0694">RNA-binding</keyword>
<keyword id="KW-0699">rRNA-binding</keyword>
<gene>
    <name evidence="1" type="primary">rpsF</name>
    <name type="ordered locus">stu1754</name>
</gene>
<dbReference type="EMBL" id="CP000023">
    <property type="protein sequence ID" value="AAV61353.1"/>
    <property type="status" value="ALT_INIT"/>
    <property type="molecule type" value="Genomic_DNA"/>
</dbReference>
<dbReference type="RefSeq" id="WP_002951906.1">
    <property type="nucleotide sequence ID" value="NC_006448.1"/>
</dbReference>
<dbReference type="SMR" id="Q5M2Q3"/>
<dbReference type="STRING" id="264199.stu1754"/>
<dbReference type="GeneID" id="66899490"/>
<dbReference type="KEGG" id="stl:stu1754"/>
<dbReference type="eggNOG" id="COG0360">
    <property type="taxonomic scope" value="Bacteria"/>
</dbReference>
<dbReference type="HOGENOM" id="CLU_113441_5_3_9"/>
<dbReference type="Proteomes" id="UP000001170">
    <property type="component" value="Chromosome"/>
</dbReference>
<dbReference type="GO" id="GO:0005737">
    <property type="term" value="C:cytoplasm"/>
    <property type="evidence" value="ECO:0007669"/>
    <property type="project" value="UniProtKB-ARBA"/>
</dbReference>
<dbReference type="GO" id="GO:1990904">
    <property type="term" value="C:ribonucleoprotein complex"/>
    <property type="evidence" value="ECO:0007669"/>
    <property type="project" value="UniProtKB-KW"/>
</dbReference>
<dbReference type="GO" id="GO:0005840">
    <property type="term" value="C:ribosome"/>
    <property type="evidence" value="ECO:0007669"/>
    <property type="project" value="UniProtKB-KW"/>
</dbReference>
<dbReference type="GO" id="GO:0070181">
    <property type="term" value="F:small ribosomal subunit rRNA binding"/>
    <property type="evidence" value="ECO:0007669"/>
    <property type="project" value="TreeGrafter"/>
</dbReference>
<dbReference type="GO" id="GO:0003735">
    <property type="term" value="F:structural constituent of ribosome"/>
    <property type="evidence" value="ECO:0007669"/>
    <property type="project" value="InterPro"/>
</dbReference>
<dbReference type="GO" id="GO:0006412">
    <property type="term" value="P:translation"/>
    <property type="evidence" value="ECO:0007669"/>
    <property type="project" value="UniProtKB-UniRule"/>
</dbReference>
<dbReference type="CDD" id="cd00473">
    <property type="entry name" value="bS6"/>
    <property type="match status" value="1"/>
</dbReference>
<dbReference type="FunFam" id="3.30.70.60:FF:000002">
    <property type="entry name" value="30S ribosomal protein S6"/>
    <property type="match status" value="1"/>
</dbReference>
<dbReference type="Gene3D" id="3.30.70.60">
    <property type="match status" value="1"/>
</dbReference>
<dbReference type="HAMAP" id="MF_00360">
    <property type="entry name" value="Ribosomal_bS6"/>
    <property type="match status" value="1"/>
</dbReference>
<dbReference type="InterPro" id="IPR000529">
    <property type="entry name" value="Ribosomal_bS6"/>
</dbReference>
<dbReference type="InterPro" id="IPR035980">
    <property type="entry name" value="Ribosomal_bS6_sf"/>
</dbReference>
<dbReference type="InterPro" id="IPR020814">
    <property type="entry name" value="Ribosomal_S6_plastid/chlpt"/>
</dbReference>
<dbReference type="InterPro" id="IPR014717">
    <property type="entry name" value="Transl_elong_EF1B/ribsomal_bS6"/>
</dbReference>
<dbReference type="NCBIfam" id="TIGR00166">
    <property type="entry name" value="S6"/>
    <property type="match status" value="1"/>
</dbReference>
<dbReference type="PANTHER" id="PTHR21011">
    <property type="entry name" value="MITOCHONDRIAL 28S RIBOSOMAL PROTEIN S6"/>
    <property type="match status" value="1"/>
</dbReference>
<dbReference type="PANTHER" id="PTHR21011:SF1">
    <property type="entry name" value="SMALL RIBOSOMAL SUBUNIT PROTEIN BS6M"/>
    <property type="match status" value="1"/>
</dbReference>
<dbReference type="Pfam" id="PF01250">
    <property type="entry name" value="Ribosomal_S6"/>
    <property type="match status" value="1"/>
</dbReference>
<dbReference type="SUPFAM" id="SSF54995">
    <property type="entry name" value="Ribosomal protein S6"/>
    <property type="match status" value="1"/>
</dbReference>
<sequence length="96" mass="11111">MAKYEILYIIRPNIEEEAKNALVARFDSILTDNGATVVESKDWEKRRLAYEIQDFREGLYHVVNVEANDATALNEFDRLSKINGDILRHMIVKLDA</sequence>
<organism>
    <name type="scientific">Streptococcus thermophilus (strain ATCC BAA-250 / LMG 18311)</name>
    <dbReference type="NCBI Taxonomy" id="264199"/>
    <lineage>
        <taxon>Bacteria</taxon>
        <taxon>Bacillati</taxon>
        <taxon>Bacillota</taxon>
        <taxon>Bacilli</taxon>
        <taxon>Lactobacillales</taxon>
        <taxon>Streptococcaceae</taxon>
        <taxon>Streptococcus</taxon>
    </lineage>
</organism>
<accession>Q5M2Q3</accession>
<feature type="chain" id="PRO_0000229583" description="Small ribosomal subunit protein bS6">
    <location>
        <begin position="1"/>
        <end position="96"/>
    </location>
</feature>
<reference key="1">
    <citation type="journal article" date="2004" name="Nat. Biotechnol.">
        <title>Complete sequence and comparative genome analysis of the dairy bacterium Streptococcus thermophilus.</title>
        <authorList>
            <person name="Bolotin A."/>
            <person name="Quinquis B."/>
            <person name="Renault P."/>
            <person name="Sorokin A."/>
            <person name="Ehrlich S.D."/>
            <person name="Kulakauskas S."/>
            <person name="Lapidus A."/>
            <person name="Goltsman E."/>
            <person name="Mazur M."/>
            <person name="Pusch G.D."/>
            <person name="Fonstein M."/>
            <person name="Overbeek R."/>
            <person name="Kyprides N."/>
            <person name="Purnelle B."/>
            <person name="Prozzi D."/>
            <person name="Ngui K."/>
            <person name="Masuy D."/>
            <person name="Hancy F."/>
            <person name="Burteau S."/>
            <person name="Boutry M."/>
            <person name="Delcour J."/>
            <person name="Goffeau A."/>
            <person name="Hols P."/>
        </authorList>
    </citation>
    <scope>NUCLEOTIDE SEQUENCE [LARGE SCALE GENOMIC DNA]</scope>
    <source>
        <strain>ATCC BAA-250 / LMG 18311</strain>
    </source>
</reference>
<proteinExistence type="inferred from homology"/>